<protein>
    <recommendedName>
        <fullName>Chaperone protein FaeE</fullName>
    </recommendedName>
</protein>
<comment type="function">
    <text>Mediates assembly of pili by forming soluble multimeric complexes with pili subunits as an intermediate step in the assembly process. This protein is involved in K88 pili assembly. Protects pilin protein from proteolytic degradation by DegP and from premature polymerization.</text>
</comment>
<comment type="subcellular location">
    <subcellularLocation>
        <location>Periplasm</location>
    </subcellularLocation>
</comment>
<comment type="similarity">
    <text evidence="3">Belongs to the periplasmic pilus chaperone family.</text>
</comment>
<reference key="1">
    <citation type="journal article" date="1991" name="Mol. Microbiol.">
        <title>Structure and function of periplasmic chaperone-like proteins involved in the biosynthesis of K88 and K99 fimbriae in enterotoxigenic Escherichia coli.</title>
        <authorList>
            <person name="Bakker D."/>
            <person name="Vader C.E.M."/>
            <person name="Roosendaal B."/>
            <person name="Mooi F.R."/>
            <person name="Oudega B."/>
            <person name="de Graaf F.K."/>
        </authorList>
    </citation>
    <scope>NUCLEOTIDE SEQUENCE [GENOMIC DNA]</scope>
</reference>
<reference key="2">
    <citation type="journal article" date="1992" name="J. Bacteriol.">
        <title>Identification of minor fimbrial subunits involved in biosynthesis of K88 fimbriae.</title>
        <authorList>
            <person name="Bakker D."/>
            <person name="Willemsen P.T.J."/>
            <person name="Willems R.H."/>
            <person name="Huisman T.T."/>
            <person name="Mooi F.R."/>
            <person name="Oudega B."/>
            <person name="Stegehuis F."/>
            <person name="de Graaf F.K."/>
        </authorList>
    </citation>
    <scope>NUCLEOTIDE SEQUENCE [GENOMIC DNA] OF 244-258</scope>
</reference>
<geneLocation type="plasmid">
    <name>pFM205</name>
</geneLocation>
<organism>
    <name type="scientific">Escherichia coli</name>
    <dbReference type="NCBI Taxonomy" id="562"/>
    <lineage>
        <taxon>Bacteria</taxon>
        <taxon>Pseudomonadati</taxon>
        <taxon>Pseudomonadota</taxon>
        <taxon>Gammaproteobacteria</taxon>
        <taxon>Enterobacterales</taxon>
        <taxon>Enterobacteriaceae</taxon>
        <taxon>Escherichia</taxon>
    </lineage>
</organism>
<gene>
    <name type="primary">faeE</name>
</gene>
<sequence>MSKRNAVTTFFTNRVTKALGMTLALMMTCQSAMASLAVDQTRYIFRGDKDALTITVTNNDKERTFGGQAWVDNIVEKDTRPTFVVTPSFFKVKPNGQQTLRIIMASDHLPKDKESVYWLNLQDIPPALEGSGIAVALRTKLKLFYRPKALLEGRKGAEEGISLQSRPDGRTMLVNTTPYIFAIGSLLDGNGKKIATDNGTTQKLLMFMPGDEVQVKGNVVKVDSLNDYGELQTWTINKKKPAAPEAAKAEKADTAEQK</sequence>
<keyword id="KW-0002">3D-structure</keyword>
<keyword id="KW-0143">Chaperone</keyword>
<keyword id="KW-1029">Fimbrium biogenesis</keyword>
<keyword id="KW-0393">Immunoglobulin domain</keyword>
<keyword id="KW-0574">Periplasm</keyword>
<keyword id="KW-0614">Plasmid</keyword>
<keyword id="KW-0732">Signal</keyword>
<feature type="signal peptide" evidence="1">
    <location>
        <begin position="1"/>
        <end position="34"/>
    </location>
</feature>
<feature type="chain" id="PRO_0000009270" description="Chaperone protein FaeE">
    <location>
        <begin position="35"/>
        <end position="258"/>
    </location>
</feature>
<feature type="region of interest" description="Disordered" evidence="2">
    <location>
        <begin position="239"/>
        <end position="258"/>
    </location>
</feature>
<feature type="compositionally biased region" description="Basic and acidic residues" evidence="2">
    <location>
        <begin position="247"/>
        <end position="258"/>
    </location>
</feature>
<feature type="strand" evidence="4">
    <location>
        <begin position="36"/>
        <end position="39"/>
    </location>
</feature>
<feature type="strand" evidence="6">
    <location>
        <begin position="41"/>
        <end position="46"/>
    </location>
</feature>
<feature type="strand" evidence="6">
    <location>
        <begin position="52"/>
        <end position="58"/>
    </location>
</feature>
<feature type="strand" evidence="5">
    <location>
        <begin position="61"/>
        <end position="63"/>
    </location>
</feature>
<feature type="strand" evidence="6">
    <location>
        <begin position="65"/>
        <end position="75"/>
    </location>
</feature>
<feature type="strand" evidence="6">
    <location>
        <begin position="82"/>
        <end position="92"/>
    </location>
</feature>
<feature type="strand" evidence="6">
    <location>
        <begin position="97"/>
        <end position="104"/>
    </location>
</feature>
<feature type="strand" evidence="6">
    <location>
        <begin position="111"/>
        <end position="113"/>
    </location>
</feature>
<feature type="strand" evidence="6">
    <location>
        <begin position="115"/>
        <end position="124"/>
    </location>
</feature>
<feature type="strand" evidence="6">
    <location>
        <begin position="129"/>
        <end position="132"/>
    </location>
</feature>
<feature type="strand" evidence="6">
    <location>
        <begin position="135"/>
        <end position="146"/>
    </location>
</feature>
<feature type="helix" evidence="6">
    <location>
        <begin position="148"/>
        <end position="150"/>
    </location>
</feature>
<feature type="helix" evidence="6">
    <location>
        <begin position="157"/>
        <end position="160"/>
    </location>
</feature>
<feature type="strand" evidence="6">
    <location>
        <begin position="162"/>
        <end position="165"/>
    </location>
</feature>
<feature type="strand" evidence="6">
    <location>
        <begin position="171"/>
        <end position="174"/>
    </location>
</feature>
<feature type="strand" evidence="6">
    <location>
        <begin position="177"/>
        <end position="179"/>
    </location>
</feature>
<feature type="strand" evidence="6">
    <location>
        <begin position="183"/>
        <end position="188"/>
    </location>
</feature>
<feature type="strand" evidence="5">
    <location>
        <begin position="191"/>
        <end position="193"/>
    </location>
</feature>
<feature type="helix" evidence="6">
    <location>
        <begin position="198"/>
        <end position="204"/>
    </location>
</feature>
<feature type="strand" evidence="6">
    <location>
        <begin position="212"/>
        <end position="214"/>
    </location>
</feature>
<feature type="strand" evidence="6">
    <location>
        <begin position="219"/>
        <end position="225"/>
    </location>
</feature>
<feature type="strand" evidence="6">
    <location>
        <begin position="231"/>
        <end position="237"/>
    </location>
</feature>
<feature type="turn" evidence="6">
    <location>
        <begin position="243"/>
        <end position="245"/>
    </location>
</feature>
<name>FAEE_ECOLX</name>
<proteinExistence type="evidence at protein level"/>
<accession>P25401</accession>
<dbReference type="EMBL" id="X56003">
    <property type="protein sequence ID" value="CAA39478.1"/>
    <property type="molecule type" value="Genomic_DNA"/>
</dbReference>
<dbReference type="EMBL" id="Z11699">
    <property type="protein sequence ID" value="CAA77756.1"/>
    <property type="molecule type" value="Genomic_DNA"/>
</dbReference>
<dbReference type="PIR" id="S15227">
    <property type="entry name" value="S15227"/>
</dbReference>
<dbReference type="RefSeq" id="WP_000044493.1">
    <property type="nucleotide sequence ID" value="NZ_QZWA01000069.1"/>
</dbReference>
<dbReference type="PDB" id="3F65">
    <property type="method" value="X-ray"/>
    <property type="resolution" value="2.29 A"/>
    <property type="chains" value="A/B/C/D/E/F/G/H=35-258"/>
</dbReference>
<dbReference type="PDB" id="3F6I">
    <property type="method" value="X-ray"/>
    <property type="resolution" value="2.79 A"/>
    <property type="chains" value="A/B=35-258"/>
</dbReference>
<dbReference type="PDB" id="3F6L">
    <property type="method" value="X-ray"/>
    <property type="resolution" value="2.80 A"/>
    <property type="chains" value="A/B=35-258"/>
</dbReference>
<dbReference type="PDB" id="3GEW">
    <property type="method" value="X-ray"/>
    <property type="resolution" value="2.00 A"/>
    <property type="chains" value="B/C=35-258"/>
</dbReference>
<dbReference type="PDB" id="3GFU">
    <property type="method" value="X-ray"/>
    <property type="resolution" value="1.99 A"/>
    <property type="chains" value="A/C=35-258"/>
</dbReference>
<dbReference type="PDBsum" id="3F65"/>
<dbReference type="PDBsum" id="3F6I"/>
<dbReference type="PDBsum" id="3F6L"/>
<dbReference type="PDBsum" id="3GEW"/>
<dbReference type="PDBsum" id="3GFU"/>
<dbReference type="SMR" id="P25401"/>
<dbReference type="EvolutionaryTrace" id="P25401"/>
<dbReference type="GO" id="GO:0030288">
    <property type="term" value="C:outer membrane-bounded periplasmic space"/>
    <property type="evidence" value="ECO:0007669"/>
    <property type="project" value="InterPro"/>
</dbReference>
<dbReference type="GO" id="GO:0071555">
    <property type="term" value="P:cell wall organization"/>
    <property type="evidence" value="ECO:0007669"/>
    <property type="project" value="InterPro"/>
</dbReference>
<dbReference type="GO" id="GO:0061077">
    <property type="term" value="P:chaperone-mediated protein folding"/>
    <property type="evidence" value="ECO:0007669"/>
    <property type="project" value="InterPro"/>
</dbReference>
<dbReference type="Gene3D" id="2.60.40.10">
    <property type="entry name" value="Immunoglobulins"/>
    <property type="match status" value="2"/>
</dbReference>
<dbReference type="InterPro" id="IPR013783">
    <property type="entry name" value="Ig-like_fold"/>
</dbReference>
<dbReference type="InterPro" id="IPR008962">
    <property type="entry name" value="PapD-like_sf"/>
</dbReference>
<dbReference type="InterPro" id="IPR050643">
    <property type="entry name" value="Periplasmic_pilus_chap"/>
</dbReference>
<dbReference type="InterPro" id="IPR036316">
    <property type="entry name" value="Pili_assmbl_chap_C_dom_sf"/>
</dbReference>
<dbReference type="InterPro" id="IPR001829">
    <property type="entry name" value="Pili_assmbl_chaperone_bac"/>
</dbReference>
<dbReference type="InterPro" id="IPR018046">
    <property type="entry name" value="Pili_assmbl_chaperone_CS"/>
</dbReference>
<dbReference type="InterPro" id="IPR016147">
    <property type="entry name" value="Pili_assmbl_chaperone_N"/>
</dbReference>
<dbReference type="PANTHER" id="PTHR30251:SF2">
    <property type="entry name" value="FIMBRIAL CHAPERONE YADV-RELATED"/>
    <property type="match status" value="1"/>
</dbReference>
<dbReference type="PANTHER" id="PTHR30251">
    <property type="entry name" value="PILUS ASSEMBLY CHAPERONE"/>
    <property type="match status" value="1"/>
</dbReference>
<dbReference type="Pfam" id="PF00345">
    <property type="entry name" value="PapD_N"/>
    <property type="match status" value="1"/>
</dbReference>
<dbReference type="PRINTS" id="PR00969">
    <property type="entry name" value="CHAPERONPILI"/>
</dbReference>
<dbReference type="SUPFAM" id="SSF49354">
    <property type="entry name" value="PapD-like"/>
    <property type="match status" value="1"/>
</dbReference>
<dbReference type="SUPFAM" id="SSF49584">
    <property type="entry name" value="Periplasmic chaperone C-domain"/>
    <property type="match status" value="1"/>
</dbReference>
<dbReference type="PROSITE" id="PS00635">
    <property type="entry name" value="PILI_CHAPERONE"/>
    <property type="match status" value="1"/>
</dbReference>
<evidence type="ECO:0000255" key="1"/>
<evidence type="ECO:0000256" key="2">
    <source>
        <dbReference type="SAM" id="MobiDB-lite"/>
    </source>
</evidence>
<evidence type="ECO:0000305" key="3"/>
<evidence type="ECO:0007829" key="4">
    <source>
        <dbReference type="PDB" id="3F65"/>
    </source>
</evidence>
<evidence type="ECO:0007829" key="5">
    <source>
        <dbReference type="PDB" id="3F6L"/>
    </source>
</evidence>
<evidence type="ECO:0007829" key="6">
    <source>
        <dbReference type="PDB" id="3GFU"/>
    </source>
</evidence>